<feature type="transit peptide" description="Mitochondrion" evidence="2">
    <location>
        <begin position="1"/>
        <end position="47"/>
    </location>
</feature>
<feature type="chain" id="PRO_0000421459" description="Probable UDP-3-O-acylglucosamine N-acyltransferase 2, mitochondrial">
    <location>
        <begin position="48"/>
        <end position="304"/>
    </location>
</feature>
<feature type="active site" description="Proton acceptor" evidence="1">
    <location>
        <position position="216"/>
    </location>
</feature>
<feature type="binding site" evidence="1">
    <location>
        <begin position="159"/>
        <end position="161"/>
    </location>
    <ligand>
        <name>UDP-N-acetyl-alpha-D-glucosamine</name>
        <dbReference type="ChEBI" id="CHEBI:57705"/>
    </ligand>
</feature>
<feature type="binding site" evidence="1">
    <location>
        <position position="209"/>
    </location>
    <ligand>
        <name>hexadecanoate</name>
        <dbReference type="ChEBI" id="CHEBI:7896"/>
    </ligand>
</feature>
<feature type="binding site" evidence="1">
    <location>
        <position position="213"/>
    </location>
    <ligand>
        <name>hexadecanoate</name>
        <dbReference type="ChEBI" id="CHEBI:7896"/>
    </ligand>
</feature>
<feature type="binding site" evidence="1">
    <location>
        <position position="217"/>
    </location>
    <ligand>
        <name>UDP-N-acetyl-alpha-D-glucosamine</name>
        <dbReference type="ChEBI" id="CHEBI:57705"/>
    </ligand>
</feature>
<feature type="binding site" evidence="1">
    <location>
        <position position="235"/>
    </location>
    <ligand>
        <name>UDP-N-acetyl-alpha-D-glucosamine</name>
        <dbReference type="ChEBI" id="CHEBI:57705"/>
    </ligand>
</feature>
<feature type="binding site" evidence="1">
    <location>
        <position position="253"/>
    </location>
    <ligand>
        <name>UDP-N-acetyl-alpha-D-glucosamine</name>
        <dbReference type="ChEBI" id="CHEBI:57705"/>
    </ligand>
</feature>
<feature type="site" description="Participates in a stacking interaction with the uracil ring of UDP-GlcNAc" evidence="1">
    <location>
        <position position="9"/>
    </location>
</feature>
<evidence type="ECO:0000250" key="1"/>
<evidence type="ECO:0000255" key="2"/>
<evidence type="ECO:0000269" key="3">
    <source>
    </source>
</evidence>
<evidence type="ECO:0000303" key="4">
    <source>
    </source>
</evidence>
<evidence type="ECO:0000305" key="5"/>
<accession>F4JIP6</accession>
<accession>O49563</accession>
<reference key="1">
    <citation type="journal article" date="1999" name="Nature">
        <title>Sequence and analysis of chromosome 4 of the plant Arabidopsis thaliana.</title>
        <authorList>
            <person name="Mayer K.F.X."/>
            <person name="Schueller C."/>
            <person name="Wambutt R."/>
            <person name="Murphy G."/>
            <person name="Volckaert G."/>
            <person name="Pohl T."/>
            <person name="Duesterhoeft A."/>
            <person name="Stiekema W."/>
            <person name="Entian K.-D."/>
            <person name="Terryn N."/>
            <person name="Harris B."/>
            <person name="Ansorge W."/>
            <person name="Brandt P."/>
            <person name="Grivell L.A."/>
            <person name="Rieger M."/>
            <person name="Weichselgartner M."/>
            <person name="de Simone V."/>
            <person name="Obermaier B."/>
            <person name="Mache R."/>
            <person name="Mueller M."/>
            <person name="Kreis M."/>
            <person name="Delseny M."/>
            <person name="Puigdomenech P."/>
            <person name="Watson M."/>
            <person name="Schmidtheini T."/>
            <person name="Reichert B."/>
            <person name="Portetelle D."/>
            <person name="Perez-Alonso M."/>
            <person name="Boutry M."/>
            <person name="Bancroft I."/>
            <person name="Vos P."/>
            <person name="Hoheisel J."/>
            <person name="Zimmermann W."/>
            <person name="Wedler H."/>
            <person name="Ridley P."/>
            <person name="Langham S.-A."/>
            <person name="McCullagh B."/>
            <person name="Bilham L."/>
            <person name="Robben J."/>
            <person name="van der Schueren J."/>
            <person name="Grymonprez B."/>
            <person name="Chuang Y.-J."/>
            <person name="Vandenbussche F."/>
            <person name="Braeken M."/>
            <person name="Weltjens I."/>
            <person name="Voet M."/>
            <person name="Bastiaens I."/>
            <person name="Aert R."/>
            <person name="Defoor E."/>
            <person name="Weitzenegger T."/>
            <person name="Bothe G."/>
            <person name="Ramsperger U."/>
            <person name="Hilbert H."/>
            <person name="Braun M."/>
            <person name="Holzer E."/>
            <person name="Brandt A."/>
            <person name="Peters S."/>
            <person name="van Staveren M."/>
            <person name="Dirkse W."/>
            <person name="Mooijman P."/>
            <person name="Klein Lankhorst R."/>
            <person name="Rose M."/>
            <person name="Hauf J."/>
            <person name="Koetter P."/>
            <person name="Berneiser S."/>
            <person name="Hempel S."/>
            <person name="Feldpausch M."/>
            <person name="Lamberth S."/>
            <person name="Van den Daele H."/>
            <person name="De Keyser A."/>
            <person name="Buysshaert C."/>
            <person name="Gielen J."/>
            <person name="Villarroel R."/>
            <person name="De Clercq R."/>
            <person name="van Montagu M."/>
            <person name="Rogers J."/>
            <person name="Cronin A."/>
            <person name="Quail M.A."/>
            <person name="Bray-Allen S."/>
            <person name="Clark L."/>
            <person name="Doggett J."/>
            <person name="Hall S."/>
            <person name="Kay M."/>
            <person name="Lennard N."/>
            <person name="McLay K."/>
            <person name="Mayes R."/>
            <person name="Pettett A."/>
            <person name="Rajandream M.A."/>
            <person name="Lyne M."/>
            <person name="Benes V."/>
            <person name="Rechmann S."/>
            <person name="Borkova D."/>
            <person name="Bloecker H."/>
            <person name="Scharfe M."/>
            <person name="Grimm M."/>
            <person name="Loehnert T.-H."/>
            <person name="Dose S."/>
            <person name="de Haan M."/>
            <person name="Maarse A.C."/>
            <person name="Schaefer M."/>
            <person name="Mueller-Auer S."/>
            <person name="Gabel C."/>
            <person name="Fuchs M."/>
            <person name="Fartmann B."/>
            <person name="Granderath K."/>
            <person name="Dauner D."/>
            <person name="Herzl A."/>
            <person name="Neumann S."/>
            <person name="Argiriou A."/>
            <person name="Vitale D."/>
            <person name="Liguori R."/>
            <person name="Piravandi E."/>
            <person name="Massenet O."/>
            <person name="Quigley F."/>
            <person name="Clabauld G."/>
            <person name="Muendlein A."/>
            <person name="Felber R."/>
            <person name="Schnabl S."/>
            <person name="Hiller R."/>
            <person name="Schmidt W."/>
            <person name="Lecharny A."/>
            <person name="Aubourg S."/>
            <person name="Chefdor F."/>
            <person name="Cooke R."/>
            <person name="Berger C."/>
            <person name="Monfort A."/>
            <person name="Casacuberta E."/>
            <person name="Gibbons T."/>
            <person name="Weber N."/>
            <person name="Vandenbol M."/>
            <person name="Bargues M."/>
            <person name="Terol J."/>
            <person name="Torres A."/>
            <person name="Perez-Perez A."/>
            <person name="Purnelle B."/>
            <person name="Bent E."/>
            <person name="Johnson S."/>
            <person name="Tacon D."/>
            <person name="Jesse T."/>
            <person name="Heijnen L."/>
            <person name="Schwarz S."/>
            <person name="Scholler P."/>
            <person name="Heber S."/>
            <person name="Francs P."/>
            <person name="Bielke C."/>
            <person name="Frishman D."/>
            <person name="Haase D."/>
            <person name="Lemcke K."/>
            <person name="Mewes H.-W."/>
            <person name="Stocker S."/>
            <person name="Zaccaria P."/>
            <person name="Bevan M."/>
            <person name="Wilson R.K."/>
            <person name="de la Bastide M."/>
            <person name="Habermann K."/>
            <person name="Parnell L."/>
            <person name="Dedhia N."/>
            <person name="Gnoj L."/>
            <person name="Schutz K."/>
            <person name="Huang E."/>
            <person name="Spiegel L."/>
            <person name="Sekhon M."/>
            <person name="Murray J."/>
            <person name="Sheet P."/>
            <person name="Cordes M."/>
            <person name="Abu-Threideh J."/>
            <person name="Stoneking T."/>
            <person name="Kalicki J."/>
            <person name="Graves T."/>
            <person name="Harmon G."/>
            <person name="Edwards J."/>
            <person name="Latreille P."/>
            <person name="Courtney L."/>
            <person name="Cloud J."/>
            <person name="Abbott A."/>
            <person name="Scott K."/>
            <person name="Johnson D."/>
            <person name="Minx P."/>
            <person name="Bentley D."/>
            <person name="Fulton B."/>
            <person name="Miller N."/>
            <person name="Greco T."/>
            <person name="Kemp K."/>
            <person name="Kramer J."/>
            <person name="Fulton L."/>
            <person name="Mardis E."/>
            <person name="Dante M."/>
            <person name="Pepin K."/>
            <person name="Hillier L.W."/>
            <person name="Nelson J."/>
            <person name="Spieth J."/>
            <person name="Ryan E."/>
            <person name="Andrews S."/>
            <person name="Geisel C."/>
            <person name="Layman D."/>
            <person name="Du H."/>
            <person name="Ali J."/>
            <person name="Berghoff A."/>
            <person name="Jones K."/>
            <person name="Drone K."/>
            <person name="Cotton M."/>
            <person name="Joshu C."/>
            <person name="Antonoiu B."/>
            <person name="Zidanic M."/>
            <person name="Strong C."/>
            <person name="Sun H."/>
            <person name="Lamar B."/>
            <person name="Yordan C."/>
            <person name="Ma P."/>
            <person name="Zhong J."/>
            <person name="Preston R."/>
            <person name="Vil D."/>
            <person name="Shekher M."/>
            <person name="Matero A."/>
            <person name="Shah R."/>
            <person name="Swaby I.K."/>
            <person name="O'Shaughnessy A."/>
            <person name="Rodriguez M."/>
            <person name="Hoffman J."/>
            <person name="Till S."/>
            <person name="Granat S."/>
            <person name="Shohdy N."/>
            <person name="Hasegawa A."/>
            <person name="Hameed A."/>
            <person name="Lodhi M."/>
            <person name="Johnson A."/>
            <person name="Chen E."/>
            <person name="Marra M.A."/>
            <person name="Martienssen R."/>
            <person name="McCombie W.R."/>
        </authorList>
    </citation>
    <scope>NUCLEOTIDE SEQUENCE [LARGE SCALE GENOMIC DNA]</scope>
    <source>
        <strain>cv. Columbia</strain>
    </source>
</reference>
<reference key="2">
    <citation type="journal article" date="2017" name="Plant J.">
        <title>Araport11: a complete reannotation of the Arabidopsis thaliana reference genome.</title>
        <authorList>
            <person name="Cheng C.Y."/>
            <person name="Krishnakumar V."/>
            <person name="Chan A.P."/>
            <person name="Thibaud-Nissen F."/>
            <person name="Schobel S."/>
            <person name="Town C.D."/>
        </authorList>
    </citation>
    <scope>GENOME REANNOTATION</scope>
    <source>
        <strain>cv. Columbia</strain>
    </source>
</reference>
<reference key="3">
    <citation type="journal article" date="2011" name="Proc. Natl. Acad. Sci. U.S.A.">
        <title>Pathway for lipid A biosynthesis in Arabidopsis thaliana resembling that of Escherichia coli.</title>
        <authorList>
            <person name="Li C."/>
            <person name="Guan Z."/>
            <person name="Liu D."/>
            <person name="Raetz C.R."/>
        </authorList>
    </citation>
    <scope>PATHWAY</scope>
    <scope>SUBCELLULAR LOCATION</scope>
    <scope>GENE FAMILY</scope>
    <scope>NOMENCLATURE</scope>
    <scope>DISRUPTION PHENOTYPE</scope>
</reference>
<proteinExistence type="inferred from homology"/>
<comment type="function">
    <text evidence="4">Involved in the biosynthesis of lipid A, a phosphorylated glycolipid that in bacteria anchors the lipopolysaccharide to the outer membrane of the cell. Lipid A-like molecules in plants may serve as structural components of the outer membranes of mitochondria and/or chloroplasts, or may be involved in signal transduction or plant defense responses.</text>
</comment>
<comment type="catalytic activity">
    <reaction>
        <text>a UDP-3-O-[(3R)-3-hydroxyacyl]-alpha-D-glucosamine + a (3R)-hydroxyacyl-[ACP] = a UDP-2-N,3-O-bis[(3R)-3-hydroxyacyl]-alpha-D-glucosamine + holo-[ACP] + H(+)</text>
        <dbReference type="Rhea" id="RHEA:53836"/>
        <dbReference type="Rhea" id="RHEA-COMP:9685"/>
        <dbReference type="Rhea" id="RHEA-COMP:9945"/>
        <dbReference type="ChEBI" id="CHEBI:15378"/>
        <dbReference type="ChEBI" id="CHEBI:64479"/>
        <dbReference type="ChEBI" id="CHEBI:78827"/>
        <dbReference type="ChEBI" id="CHEBI:137740"/>
        <dbReference type="ChEBI" id="CHEBI:137748"/>
    </reaction>
</comment>
<comment type="pathway">
    <text evidence="3">Glycolipid biosynthesis; lipid IV(A) biosynthesis; lipid IV(A) from (3R)-3-hydroxytetradecanoyl-[acyl-carrier-protein] and UDP-N-acetyl-alpha-D-glucosamine: step 3/6.</text>
</comment>
<comment type="subunit">
    <text evidence="1">Homotrimer.</text>
</comment>
<comment type="subcellular location">
    <subcellularLocation>
        <location evidence="3">Mitochondrion</location>
    </subcellularLocation>
</comment>
<comment type="disruption phenotype">
    <text evidence="3">No visible phenotype under normal growth conditions, but plants lacking LPXD2 do not accumulate 2,3-diacylglucosamine-1-phosphate.</text>
</comment>
<comment type="similarity">
    <text evidence="5">Belongs to the transferase hexapeptide repeat family. LpxD subfamily.</text>
</comment>
<comment type="sequence caution" evidence="5">
    <conflict type="erroneous gene model prediction">
        <sequence resource="EMBL-CDS" id="CAA17541"/>
    </conflict>
</comment>
<comment type="sequence caution" evidence="5">
    <conflict type="erroneous gene model prediction">
        <sequence resource="EMBL-CDS" id="CAB79122"/>
    </conflict>
</comment>
<gene>
    <name type="primary">LPXD2</name>
    <name type="ordered locus">At4g21220</name>
    <name type="ORF">F7J7.160</name>
</gene>
<name>LPXD2_ARATH</name>
<sequence length="304" mass="32331">MAATLWRLYSKSICNSLQGIILNKPFIQKQLLLSSRTRSLSFSSDSQFGSATAEVCSNTGLKTGGGIIVKEGFLRWENGGGTCHSSAQIYSSALVEFGAVVHEKAVLGAEVHVGSGTVIGPSVDIGPSTRIGYNVSISNCSIGDSCVIHNGVCIGQDGFGFYVDEHGNMVKKPQTLNVKIGNRVEIGANTCIDRGSWRETVIEDDTKIDNLVQIGHNVIIGKCCLLCGQVGIAGSVTIGDYVALGGRAAVRDHVSIVSKVRLAANSCVTRNITEPGDFGGFPAVPIHEWRKQIVRAQIANKREI</sequence>
<protein>
    <recommendedName>
        <fullName evidence="4">Probable UDP-3-O-acylglucosamine N-acyltransferase 2, mitochondrial</fullName>
        <ecNumber evidence="4">2.3.1.-</ecNumber>
    </recommendedName>
    <alternativeName>
        <fullName>Protein LIPID X D2</fullName>
        <shortName>AtLpxD2</shortName>
    </alternativeName>
</protein>
<keyword id="KW-0012">Acyltransferase</keyword>
<keyword id="KW-0441">Lipid A biosynthesis</keyword>
<keyword id="KW-0444">Lipid biosynthesis</keyword>
<keyword id="KW-0443">Lipid metabolism</keyword>
<keyword id="KW-0496">Mitochondrion</keyword>
<keyword id="KW-1185">Reference proteome</keyword>
<keyword id="KW-0808">Transferase</keyword>
<keyword id="KW-0809">Transit peptide</keyword>
<dbReference type="EC" id="2.3.1.-" evidence="4"/>
<dbReference type="EMBL" id="AL021960">
    <property type="protein sequence ID" value="CAA17541.1"/>
    <property type="status" value="ALT_SEQ"/>
    <property type="molecule type" value="Genomic_DNA"/>
</dbReference>
<dbReference type="EMBL" id="AL161554">
    <property type="protein sequence ID" value="CAB79122.1"/>
    <property type="status" value="ALT_SEQ"/>
    <property type="molecule type" value="Genomic_DNA"/>
</dbReference>
<dbReference type="EMBL" id="CP002687">
    <property type="protein sequence ID" value="AEE84429.1"/>
    <property type="molecule type" value="Genomic_DNA"/>
</dbReference>
<dbReference type="PIR" id="T04953">
    <property type="entry name" value="T04953"/>
</dbReference>
<dbReference type="RefSeq" id="NP_193854.2">
    <property type="nucleotide sequence ID" value="NM_118241.3"/>
</dbReference>
<dbReference type="SMR" id="F4JIP6"/>
<dbReference type="FunCoup" id="F4JIP6">
    <property type="interactions" value="388"/>
</dbReference>
<dbReference type="STRING" id="3702.F4JIP6"/>
<dbReference type="PaxDb" id="3702-AT4G21220.1"/>
<dbReference type="ProteomicsDB" id="238728"/>
<dbReference type="EnsemblPlants" id="AT4G21220.1">
    <property type="protein sequence ID" value="AT4G21220.1"/>
    <property type="gene ID" value="AT4G21220"/>
</dbReference>
<dbReference type="GeneID" id="827871"/>
<dbReference type="Gramene" id="AT4G21220.1">
    <property type="protein sequence ID" value="AT4G21220.1"/>
    <property type="gene ID" value="AT4G21220"/>
</dbReference>
<dbReference type="KEGG" id="ath:AT4G21220"/>
<dbReference type="Araport" id="AT4G21220"/>
<dbReference type="TAIR" id="AT4G21220">
    <property type="gene designation" value="LPXD2"/>
</dbReference>
<dbReference type="eggNOG" id="ENOG502QV70">
    <property type="taxonomic scope" value="Eukaryota"/>
</dbReference>
<dbReference type="HOGENOM" id="CLU_049865_3_2_1"/>
<dbReference type="InParanoid" id="F4JIP6"/>
<dbReference type="OMA" id="VDHPKYY"/>
<dbReference type="UniPathway" id="UPA00359">
    <property type="reaction ID" value="UER00479"/>
</dbReference>
<dbReference type="PRO" id="PR:F4JIP6"/>
<dbReference type="Proteomes" id="UP000006548">
    <property type="component" value="Chromosome 4"/>
</dbReference>
<dbReference type="ExpressionAtlas" id="F4JIP6">
    <property type="expression patterns" value="baseline and differential"/>
</dbReference>
<dbReference type="GO" id="GO:0016020">
    <property type="term" value="C:membrane"/>
    <property type="evidence" value="ECO:0007669"/>
    <property type="project" value="GOC"/>
</dbReference>
<dbReference type="GO" id="GO:0005739">
    <property type="term" value="C:mitochondrion"/>
    <property type="evidence" value="ECO:0000314"/>
    <property type="project" value="TAIR"/>
</dbReference>
<dbReference type="GO" id="GO:0016410">
    <property type="term" value="F:N-acyltransferase activity"/>
    <property type="evidence" value="ECO:0007669"/>
    <property type="project" value="InterPro"/>
</dbReference>
<dbReference type="GO" id="GO:0103118">
    <property type="term" value="F:UDP-3-O-(R-3-hydroxymyristoyl)-glucosamine N-acyltransferase activity"/>
    <property type="evidence" value="ECO:0000315"/>
    <property type="project" value="TAIR"/>
</dbReference>
<dbReference type="GO" id="GO:0009245">
    <property type="term" value="P:lipid A biosynthetic process"/>
    <property type="evidence" value="ECO:0007669"/>
    <property type="project" value="UniProtKB-KW"/>
</dbReference>
<dbReference type="GO" id="GO:2001289">
    <property type="term" value="P:lipid X metabolic process"/>
    <property type="evidence" value="ECO:0000315"/>
    <property type="project" value="TAIR"/>
</dbReference>
<dbReference type="CDD" id="cd03352">
    <property type="entry name" value="LbH_LpxD"/>
    <property type="match status" value="1"/>
</dbReference>
<dbReference type="FunFam" id="2.160.10.10:FF:000055">
    <property type="entry name" value="Probable UDP-3-O-acylglucosamine N-acyltransferase 1, mitochondrial"/>
    <property type="match status" value="1"/>
</dbReference>
<dbReference type="Gene3D" id="2.160.10.10">
    <property type="entry name" value="Hexapeptide repeat proteins"/>
    <property type="match status" value="1"/>
</dbReference>
<dbReference type="InterPro" id="IPR056818">
    <property type="entry name" value="GlmU/GlgC-like_hexapep"/>
</dbReference>
<dbReference type="InterPro" id="IPR001451">
    <property type="entry name" value="Hexapep"/>
</dbReference>
<dbReference type="InterPro" id="IPR007691">
    <property type="entry name" value="LpxD"/>
</dbReference>
<dbReference type="InterPro" id="IPR011004">
    <property type="entry name" value="Trimer_LpxA-like_sf"/>
</dbReference>
<dbReference type="NCBIfam" id="TIGR01853">
    <property type="entry name" value="lipid_A_lpxD"/>
    <property type="match status" value="1"/>
</dbReference>
<dbReference type="NCBIfam" id="NF002060">
    <property type="entry name" value="PRK00892.1"/>
    <property type="match status" value="1"/>
</dbReference>
<dbReference type="PANTHER" id="PTHR43378">
    <property type="entry name" value="UDP-3-O-ACYLGLUCOSAMINE N-ACYLTRANSFERASE"/>
    <property type="match status" value="1"/>
</dbReference>
<dbReference type="PANTHER" id="PTHR43378:SF2">
    <property type="entry name" value="UDP-3-O-ACYLGLUCOSAMINE N-ACYLTRANSFERASE 1, MITOCHONDRIAL-RELATED"/>
    <property type="match status" value="1"/>
</dbReference>
<dbReference type="Pfam" id="PF00132">
    <property type="entry name" value="Hexapep"/>
    <property type="match status" value="1"/>
</dbReference>
<dbReference type="Pfam" id="PF24894">
    <property type="entry name" value="Hexapep_GlmU"/>
    <property type="match status" value="1"/>
</dbReference>
<dbReference type="SUPFAM" id="SSF51161">
    <property type="entry name" value="Trimeric LpxA-like enzymes"/>
    <property type="match status" value="1"/>
</dbReference>
<dbReference type="PROSITE" id="PS00101">
    <property type="entry name" value="HEXAPEP_TRANSFERASES"/>
    <property type="match status" value="1"/>
</dbReference>
<organism>
    <name type="scientific">Arabidopsis thaliana</name>
    <name type="common">Mouse-ear cress</name>
    <dbReference type="NCBI Taxonomy" id="3702"/>
    <lineage>
        <taxon>Eukaryota</taxon>
        <taxon>Viridiplantae</taxon>
        <taxon>Streptophyta</taxon>
        <taxon>Embryophyta</taxon>
        <taxon>Tracheophyta</taxon>
        <taxon>Spermatophyta</taxon>
        <taxon>Magnoliopsida</taxon>
        <taxon>eudicotyledons</taxon>
        <taxon>Gunneridae</taxon>
        <taxon>Pentapetalae</taxon>
        <taxon>rosids</taxon>
        <taxon>malvids</taxon>
        <taxon>Brassicales</taxon>
        <taxon>Brassicaceae</taxon>
        <taxon>Camelineae</taxon>
        <taxon>Arabidopsis</taxon>
    </lineage>
</organism>